<comment type="subcellular location">
    <subcellularLocation>
        <location evidence="2">Cell membrane</location>
        <topology evidence="2">Multi-pass membrane protein</topology>
    </subcellularLocation>
</comment>
<reference key="1">
    <citation type="journal article" date="1998" name="Nature">
        <title>The genome sequence of Rickettsia prowazekii and the origin of mitochondria.</title>
        <authorList>
            <person name="Andersson S.G.E."/>
            <person name="Zomorodipour A."/>
            <person name="Andersson J.O."/>
            <person name="Sicheritz-Ponten T."/>
            <person name="Alsmark U.C.M."/>
            <person name="Podowski R.M."/>
            <person name="Naeslund A.K."/>
            <person name="Eriksson A.-S."/>
            <person name="Winkler H.H."/>
            <person name="Kurland C.G."/>
        </authorList>
    </citation>
    <scope>NUCLEOTIDE SEQUENCE [LARGE SCALE GENOMIC DNA]</scope>
    <source>
        <strain>Madrid E</strain>
    </source>
</reference>
<feature type="chain" id="PRO_0000101299" description="Uncharacterized protein RP024">
    <location>
        <begin position="1"/>
        <end position="82"/>
    </location>
</feature>
<feature type="transmembrane region" description="Helical" evidence="1">
    <location>
        <begin position="32"/>
        <end position="52"/>
    </location>
</feature>
<feature type="transmembrane region" description="Helical" evidence="1">
    <location>
        <begin position="59"/>
        <end position="79"/>
    </location>
</feature>
<evidence type="ECO:0000255" key="1"/>
<evidence type="ECO:0000305" key="2"/>
<name>Y024_RICPR</name>
<gene>
    <name type="ordered locus">RP024</name>
</gene>
<sequence>MNTEKLKDIKARIKDFKSYKTSNSKIQQKINPFSIALDLVSGTMVGLLIGILTDKFFNSKPLFLIIFTIIGMIAGFNIIRRK</sequence>
<organism>
    <name type="scientific">Rickettsia prowazekii (strain Madrid E)</name>
    <dbReference type="NCBI Taxonomy" id="272947"/>
    <lineage>
        <taxon>Bacteria</taxon>
        <taxon>Pseudomonadati</taxon>
        <taxon>Pseudomonadota</taxon>
        <taxon>Alphaproteobacteria</taxon>
        <taxon>Rickettsiales</taxon>
        <taxon>Rickettsiaceae</taxon>
        <taxon>Rickettsieae</taxon>
        <taxon>Rickettsia</taxon>
        <taxon>typhus group</taxon>
    </lineage>
</organism>
<proteinExistence type="predicted"/>
<keyword id="KW-1003">Cell membrane</keyword>
<keyword id="KW-0472">Membrane</keyword>
<keyword id="KW-1185">Reference proteome</keyword>
<keyword id="KW-0812">Transmembrane</keyword>
<keyword id="KW-1133">Transmembrane helix</keyword>
<protein>
    <recommendedName>
        <fullName>Uncharacterized protein RP024</fullName>
    </recommendedName>
</protein>
<dbReference type="EMBL" id="AJ235270">
    <property type="protein sequence ID" value="CAA14495.1"/>
    <property type="molecule type" value="Genomic_DNA"/>
</dbReference>
<dbReference type="PIR" id="H71709">
    <property type="entry name" value="H71709"/>
</dbReference>
<dbReference type="RefSeq" id="NP_220418.1">
    <property type="nucleotide sequence ID" value="NC_000963.1"/>
</dbReference>
<dbReference type="RefSeq" id="WP_004599705.1">
    <property type="nucleotide sequence ID" value="NC_000963.1"/>
</dbReference>
<dbReference type="SMR" id="Q9ZEC0"/>
<dbReference type="STRING" id="272947.gene:17555107"/>
<dbReference type="EnsemblBacteria" id="CAA14495">
    <property type="protein sequence ID" value="CAA14495"/>
    <property type="gene ID" value="CAA14495"/>
</dbReference>
<dbReference type="KEGG" id="rpr:RP024"/>
<dbReference type="PATRIC" id="fig|272947.5.peg.24"/>
<dbReference type="eggNOG" id="COG5336">
    <property type="taxonomic scope" value="Bacteria"/>
</dbReference>
<dbReference type="HOGENOM" id="CLU_2331866_0_0_5"/>
<dbReference type="OrthoDB" id="15401at2"/>
<dbReference type="Proteomes" id="UP000002480">
    <property type="component" value="Chromosome"/>
</dbReference>
<dbReference type="GO" id="GO:0005886">
    <property type="term" value="C:plasma membrane"/>
    <property type="evidence" value="ECO:0007669"/>
    <property type="project" value="UniProtKB-SubCell"/>
</dbReference>
<dbReference type="InterPro" id="IPR032820">
    <property type="entry name" value="ATPase_put"/>
</dbReference>
<dbReference type="Pfam" id="PF09527">
    <property type="entry name" value="ATPase_gene1"/>
    <property type="match status" value="1"/>
</dbReference>
<accession>Q9ZEC0</accession>